<accession>Q49751</accession>
<gene>
    <name type="ordered locus">ML0627</name>
    <name type="ORF">B1937_F1_20</name>
</gene>
<dbReference type="EMBL" id="U00016">
    <property type="protein sequence ID" value="AAA17155.1"/>
    <property type="molecule type" value="Genomic_DNA"/>
</dbReference>
<dbReference type="EMBL" id="AL583919">
    <property type="protein sequence ID" value="CAC30135.1"/>
    <property type="molecule type" value="Genomic_DNA"/>
</dbReference>
<dbReference type="PIR" id="S72587">
    <property type="entry name" value="S72587"/>
</dbReference>
<dbReference type="RefSeq" id="NP_301520.1">
    <property type="nucleotide sequence ID" value="NC_002677.1"/>
</dbReference>
<dbReference type="RefSeq" id="WP_010907844.1">
    <property type="nucleotide sequence ID" value="NC_002677.1"/>
</dbReference>
<dbReference type="SMR" id="Q49751"/>
<dbReference type="STRING" id="272631.gene:17574448"/>
<dbReference type="KEGG" id="mle:ML0627"/>
<dbReference type="PATRIC" id="fig|272631.5.peg.1108"/>
<dbReference type="Leproma" id="ML0627"/>
<dbReference type="eggNOG" id="COG1702">
    <property type="taxonomic scope" value="Bacteria"/>
</dbReference>
<dbReference type="HOGENOM" id="CLU_051654_0_0_11"/>
<dbReference type="OrthoDB" id="9805148at2"/>
<dbReference type="Proteomes" id="UP000000806">
    <property type="component" value="Chromosome"/>
</dbReference>
<dbReference type="GO" id="GO:0005829">
    <property type="term" value="C:cytosol"/>
    <property type="evidence" value="ECO:0007669"/>
    <property type="project" value="TreeGrafter"/>
</dbReference>
<dbReference type="GO" id="GO:0005524">
    <property type="term" value="F:ATP binding"/>
    <property type="evidence" value="ECO:0007669"/>
    <property type="project" value="UniProtKB-KW"/>
</dbReference>
<dbReference type="GO" id="GO:0003723">
    <property type="term" value="F:RNA binding"/>
    <property type="evidence" value="ECO:0007669"/>
    <property type="project" value="InterPro"/>
</dbReference>
<dbReference type="FunFam" id="3.40.50.300:FF:000013">
    <property type="entry name" value="PhoH family ATPase"/>
    <property type="match status" value="1"/>
</dbReference>
<dbReference type="Gene3D" id="3.40.50.300">
    <property type="entry name" value="P-loop containing nucleotide triphosphate hydrolases"/>
    <property type="match status" value="1"/>
</dbReference>
<dbReference type="InterPro" id="IPR004087">
    <property type="entry name" value="KH_dom"/>
</dbReference>
<dbReference type="InterPro" id="IPR036612">
    <property type="entry name" value="KH_dom_type_1_sf"/>
</dbReference>
<dbReference type="InterPro" id="IPR027417">
    <property type="entry name" value="P-loop_NTPase"/>
</dbReference>
<dbReference type="InterPro" id="IPR003714">
    <property type="entry name" value="PhoH"/>
</dbReference>
<dbReference type="InterPro" id="IPR051451">
    <property type="entry name" value="PhoH2-like"/>
</dbReference>
<dbReference type="PANTHER" id="PTHR30473:SF1">
    <property type="entry name" value="PHOH-LIKE PROTEIN"/>
    <property type="match status" value="1"/>
</dbReference>
<dbReference type="PANTHER" id="PTHR30473">
    <property type="entry name" value="PROTEIN PHOH"/>
    <property type="match status" value="1"/>
</dbReference>
<dbReference type="Pfam" id="PF02562">
    <property type="entry name" value="PhoH"/>
    <property type="match status" value="1"/>
</dbReference>
<dbReference type="SMART" id="SM00322">
    <property type="entry name" value="KH"/>
    <property type="match status" value="1"/>
</dbReference>
<dbReference type="SUPFAM" id="SSF54791">
    <property type="entry name" value="Eukaryotic type KH-domain (KH-domain type I)"/>
    <property type="match status" value="1"/>
</dbReference>
<dbReference type="SUPFAM" id="SSF52540">
    <property type="entry name" value="P-loop containing nucleoside triphosphate hydrolases"/>
    <property type="match status" value="1"/>
</dbReference>
<sequence>MTHHETSAVDASSASMHVRSTIDVPPDLVVGLLGSADENLRALERMLSADLHVRGNTVAFSGEPADVALAERAISELVAIVASGHPLTPEVVRHGVAMLVGTGNESPAEVLTLDILLRRGKTVRPKTLNQKRYVDAIDANTIVFGIGPAGTGKTYLAMAKAVNALQTKQVTRIILTRPAVEAGERLGFLPGTLSEKIDPYLRPLYDALYDMMDPELIPKLMSSGVIEVASLAYMRGRTLNDAFIVLDEAQNTTAEQMKMFLTRLGFGSKVVVTGDVTQIDLPGGARSGLRAAVDILEHIDDIYVAELASVDVVRHRLVSEIVDAYAEYEEHDLGMNRAARRASGARNRR</sequence>
<proteinExistence type="inferred from homology"/>
<protein>
    <recommendedName>
        <fullName>PhoH-like protein</fullName>
    </recommendedName>
</protein>
<reference key="1">
    <citation type="submission" date="1994-03" db="EMBL/GenBank/DDBJ databases">
        <authorList>
            <person name="Smith D.R."/>
            <person name="Robison K."/>
        </authorList>
    </citation>
    <scope>NUCLEOTIDE SEQUENCE [GENOMIC DNA]</scope>
</reference>
<reference key="2">
    <citation type="journal article" date="2001" name="Nature">
        <title>Massive gene decay in the leprosy bacillus.</title>
        <authorList>
            <person name="Cole S.T."/>
            <person name="Eiglmeier K."/>
            <person name="Parkhill J."/>
            <person name="James K.D."/>
            <person name="Thomson N.R."/>
            <person name="Wheeler P.R."/>
            <person name="Honore N."/>
            <person name="Garnier T."/>
            <person name="Churcher C.M."/>
            <person name="Harris D.E."/>
            <person name="Mungall K.L."/>
            <person name="Basham D."/>
            <person name="Brown D."/>
            <person name="Chillingworth T."/>
            <person name="Connor R."/>
            <person name="Davies R.M."/>
            <person name="Devlin K."/>
            <person name="Duthoy S."/>
            <person name="Feltwell T."/>
            <person name="Fraser A."/>
            <person name="Hamlin N."/>
            <person name="Holroyd S."/>
            <person name="Hornsby T."/>
            <person name="Jagels K."/>
            <person name="Lacroix C."/>
            <person name="Maclean J."/>
            <person name="Moule S."/>
            <person name="Murphy L.D."/>
            <person name="Oliver K."/>
            <person name="Quail M.A."/>
            <person name="Rajandream M.A."/>
            <person name="Rutherford K.M."/>
            <person name="Rutter S."/>
            <person name="Seeger K."/>
            <person name="Simon S."/>
            <person name="Simmonds M."/>
            <person name="Skelton J."/>
            <person name="Squares R."/>
            <person name="Squares S."/>
            <person name="Stevens K."/>
            <person name="Taylor K."/>
            <person name="Whitehead S."/>
            <person name="Woodward J.R."/>
            <person name="Barrell B.G."/>
        </authorList>
    </citation>
    <scope>NUCLEOTIDE SEQUENCE [LARGE SCALE GENOMIC DNA]</scope>
    <source>
        <strain>TN</strain>
    </source>
</reference>
<name>PHOL_MYCLE</name>
<organism>
    <name type="scientific">Mycobacterium leprae (strain TN)</name>
    <dbReference type="NCBI Taxonomy" id="272631"/>
    <lineage>
        <taxon>Bacteria</taxon>
        <taxon>Bacillati</taxon>
        <taxon>Actinomycetota</taxon>
        <taxon>Actinomycetes</taxon>
        <taxon>Mycobacteriales</taxon>
        <taxon>Mycobacteriaceae</taxon>
        <taxon>Mycobacterium</taxon>
    </lineage>
</organism>
<feature type="chain" id="PRO_0000201157" description="PhoH-like protein">
    <location>
        <begin position="1"/>
        <end position="349"/>
    </location>
</feature>
<feature type="binding site" evidence="1">
    <location>
        <begin position="147"/>
        <end position="154"/>
    </location>
    <ligand>
        <name>ATP</name>
        <dbReference type="ChEBI" id="CHEBI:30616"/>
    </ligand>
</feature>
<keyword id="KW-0067">ATP-binding</keyword>
<keyword id="KW-0963">Cytoplasm</keyword>
<keyword id="KW-0547">Nucleotide-binding</keyword>
<keyword id="KW-1185">Reference proteome</keyword>
<evidence type="ECO:0000255" key="1"/>
<evidence type="ECO:0000305" key="2"/>
<comment type="subcellular location">
    <subcellularLocation>
        <location evidence="2">Cytoplasm</location>
    </subcellularLocation>
</comment>
<comment type="similarity">
    <text evidence="2">Belongs to the PhoH family.</text>
</comment>